<proteinExistence type="predicted"/>
<organism>
    <name type="scientific">Triticum aestivum</name>
    <name type="common">Wheat</name>
    <dbReference type="NCBI Taxonomy" id="4565"/>
    <lineage>
        <taxon>Eukaryota</taxon>
        <taxon>Viridiplantae</taxon>
        <taxon>Streptophyta</taxon>
        <taxon>Embryophyta</taxon>
        <taxon>Tracheophyta</taxon>
        <taxon>Spermatophyta</taxon>
        <taxon>Magnoliopsida</taxon>
        <taxon>Liliopsida</taxon>
        <taxon>Poales</taxon>
        <taxon>Poaceae</taxon>
        <taxon>BOP clade</taxon>
        <taxon>Pooideae</taxon>
        <taxon>Triticodae</taxon>
        <taxon>Triticeae</taxon>
        <taxon>Triticinae</taxon>
        <taxon>Triticum</taxon>
    </lineage>
</organism>
<accession>Q01481</accession>
<gene>
    <name type="primary">WIR1B</name>
</gene>
<dbReference type="EMBL" id="M94959">
    <property type="protein sequence ID" value="AAA34312.1"/>
    <property type="molecule type" value="mRNA"/>
</dbReference>
<dbReference type="PIR" id="T06989">
    <property type="entry name" value="T06989"/>
</dbReference>
<dbReference type="EnsemblPlants" id="TraesARI5D03G02998150.1">
    <property type="protein sequence ID" value="TraesARI5D03G02998150.1"/>
    <property type="gene ID" value="TraesARI5D03G02998150"/>
</dbReference>
<dbReference type="EnsemblPlants" id="TraesJAG5D03G03044430.1">
    <property type="protein sequence ID" value="TraesJAG5D03G03044430.1"/>
    <property type="gene ID" value="TraesJAG5D03G03044430"/>
</dbReference>
<dbReference type="EnsemblPlants" id="TraesJUL5D03G03069840.1">
    <property type="protein sequence ID" value="TraesJUL5D03G03069840.1"/>
    <property type="gene ID" value="TraesJUL5D03G03069840"/>
</dbReference>
<dbReference type="EnsemblPlants" id="TraesKAR5D01G0037080.1">
    <property type="protein sequence ID" value="cds.TraesKAR5D01G0037080.1"/>
    <property type="gene ID" value="TraesKAR5D01G0037080"/>
</dbReference>
<dbReference type="EnsemblPlants" id="TraesLAC5D03G03001300.1">
    <property type="protein sequence ID" value="TraesLAC5D03G03001300.1"/>
    <property type="gene ID" value="TraesLAC5D03G03001300"/>
</dbReference>
<dbReference type="EnsemblPlants" id="TraesLDM5D03G03050140.1">
    <property type="protein sequence ID" value="TraesLDM5D03G03050140.1"/>
    <property type="gene ID" value="TraesLDM5D03G03050140"/>
</dbReference>
<dbReference type="EnsemblPlants" id="TraesMAC5D03G03043820.1">
    <property type="protein sequence ID" value="TraesMAC5D03G03043820.1"/>
    <property type="gene ID" value="TraesMAC5D03G03043820"/>
</dbReference>
<dbReference type="EnsemblPlants" id="TraesNOR5D03G03074290.1">
    <property type="protein sequence ID" value="TraesNOR5D03G03074290.1"/>
    <property type="gene ID" value="TraesNOR5D03G03074290"/>
</dbReference>
<dbReference type="EnsemblPlants" id="TraesRN5D0100135200.1">
    <property type="protein sequence ID" value="TraesRN5D0100135200.1"/>
    <property type="gene ID" value="TraesRN5D0100135200"/>
</dbReference>
<dbReference type="EnsemblPlants" id="TraesSTA5D03G03036570.1">
    <property type="protein sequence ID" value="TraesSTA5D03G03036570.1"/>
    <property type="gene ID" value="TraesSTA5D03G03036570"/>
</dbReference>
<dbReference type="EnsemblPlants" id="TraesWEE_scaffold_031325_01G000200.1">
    <property type="protein sequence ID" value="TraesWEE_scaffold_031325_01G000200.1"/>
    <property type="gene ID" value="TraesWEE_scaffold_031325_01G000200"/>
</dbReference>
<dbReference type="Gramene" id="TraesARI5D03G02998150.1">
    <property type="protein sequence ID" value="TraesARI5D03G02998150.1"/>
    <property type="gene ID" value="TraesARI5D03G02998150"/>
</dbReference>
<dbReference type="Gramene" id="TraesJAG5D03G03044430.1">
    <property type="protein sequence ID" value="TraesJAG5D03G03044430.1"/>
    <property type="gene ID" value="TraesJAG5D03G03044430"/>
</dbReference>
<dbReference type="Gramene" id="TraesJUL5D03G03069840.1">
    <property type="protein sequence ID" value="TraesJUL5D03G03069840.1"/>
    <property type="gene ID" value="TraesJUL5D03G03069840"/>
</dbReference>
<dbReference type="Gramene" id="TraesKAR5D01G0037080.1">
    <property type="protein sequence ID" value="cds.TraesKAR5D01G0037080.1"/>
    <property type="gene ID" value="TraesKAR5D01G0037080"/>
</dbReference>
<dbReference type="Gramene" id="TraesLAC5D03G03001300.1">
    <property type="protein sequence ID" value="TraesLAC5D03G03001300.1"/>
    <property type="gene ID" value="TraesLAC5D03G03001300"/>
</dbReference>
<dbReference type="Gramene" id="TraesLDM5D03G03050140.1">
    <property type="protein sequence ID" value="TraesLDM5D03G03050140.1"/>
    <property type="gene ID" value="TraesLDM5D03G03050140"/>
</dbReference>
<dbReference type="Gramene" id="TraesMAC5D03G03043820.1">
    <property type="protein sequence ID" value="TraesMAC5D03G03043820.1"/>
    <property type="gene ID" value="TraesMAC5D03G03043820"/>
</dbReference>
<dbReference type="Gramene" id="TraesNOR5D03G03074290.1">
    <property type="protein sequence ID" value="TraesNOR5D03G03074290.1"/>
    <property type="gene ID" value="TraesNOR5D03G03074290"/>
</dbReference>
<dbReference type="Gramene" id="TraesRN5D0100135200.1">
    <property type="protein sequence ID" value="TraesRN5D0100135200.1"/>
    <property type="gene ID" value="TraesRN5D0100135200"/>
</dbReference>
<dbReference type="Gramene" id="TraesSTA5D03G03036570.1">
    <property type="protein sequence ID" value="TraesSTA5D03G03036570.1"/>
    <property type="gene ID" value="TraesSTA5D03G03036570"/>
</dbReference>
<dbReference type="Gramene" id="TraesWEE_scaffold_031325_01G000200.1">
    <property type="protein sequence ID" value="TraesWEE_scaffold_031325_01G000200.1"/>
    <property type="gene ID" value="TraesWEE_scaffold_031325_01G000200"/>
</dbReference>
<dbReference type="Proteomes" id="UP000019116">
    <property type="component" value="Unplaced"/>
</dbReference>
<dbReference type="ExpressionAtlas" id="Q01481">
    <property type="expression patterns" value="baseline and differential"/>
</dbReference>
<dbReference type="GO" id="GO:0016020">
    <property type="term" value="C:membrane"/>
    <property type="evidence" value="ECO:0007669"/>
    <property type="project" value="UniProtKB-SubCell"/>
</dbReference>
<sequence length="85" mass="8277">MASHSAAGRRPTALVHIALFVAIAAVIINSSVCLGAAVHDAATSGTGALDPNVPAVPTPGGAGQPYTGRGCRTVYGCKPPAGSQP</sequence>
<evidence type="ECO:0000255" key="1"/>
<evidence type="ECO:0000305" key="2"/>
<reference key="1">
    <citation type="journal article" date="1992" name="Mol. Plant Microbe Interact.">
        <title>Sequence and expression of a wheat gene that encodes a novel protein associated with pathogen defense.</title>
        <authorList>
            <person name="Bull J."/>
            <person name="Mauch F."/>
            <person name="Hertig C."/>
            <person name="Rebmann G."/>
            <person name="Dudler R."/>
        </authorList>
    </citation>
    <scope>NUCLEOTIDE SEQUENCE [MRNA]</scope>
    <source>
        <tissue>Leaf</tissue>
    </source>
</reference>
<comment type="function">
    <text>Associated with pathogen defense.</text>
</comment>
<comment type="subcellular location">
    <subcellularLocation>
        <location evidence="2">Membrane</location>
        <topology evidence="2">Single-pass type II membrane protein</topology>
    </subcellularLocation>
</comment>
<keyword id="KW-0472">Membrane</keyword>
<keyword id="KW-1185">Reference proteome</keyword>
<keyword id="KW-0812">Transmembrane</keyword>
<keyword id="KW-1133">Transmembrane helix</keyword>
<name>WIR1B_WHEAT</name>
<protein>
    <recommendedName>
        <fullName>Protein WIR1B</fullName>
    </recommendedName>
</protein>
<feature type="chain" id="PRO_0000065974" description="Protein WIR1B">
    <location>
        <begin position="1"/>
        <end position="85"/>
    </location>
</feature>
<feature type="topological domain" description="Cytoplasmic" evidence="1">
    <location>
        <begin position="1"/>
        <end position="12"/>
    </location>
</feature>
<feature type="transmembrane region" description="Helical" evidence="1">
    <location>
        <begin position="13"/>
        <end position="34"/>
    </location>
</feature>
<feature type="topological domain" description="Extracellular" evidence="1">
    <location>
        <begin position="35"/>
        <end position="85"/>
    </location>
</feature>